<comment type="function">
    <text evidence="1">Specifically methylates the N7 position of guanine in position 527 of 16S rRNA.</text>
</comment>
<comment type="catalytic activity">
    <reaction evidence="1">
        <text>guanosine(527) in 16S rRNA + S-adenosyl-L-methionine = N(7)-methylguanosine(527) in 16S rRNA + S-adenosyl-L-homocysteine</text>
        <dbReference type="Rhea" id="RHEA:42732"/>
        <dbReference type="Rhea" id="RHEA-COMP:10209"/>
        <dbReference type="Rhea" id="RHEA-COMP:10210"/>
        <dbReference type="ChEBI" id="CHEBI:57856"/>
        <dbReference type="ChEBI" id="CHEBI:59789"/>
        <dbReference type="ChEBI" id="CHEBI:74269"/>
        <dbReference type="ChEBI" id="CHEBI:74480"/>
        <dbReference type="EC" id="2.1.1.170"/>
    </reaction>
</comment>
<comment type="subcellular location">
    <subcellularLocation>
        <location evidence="1">Cytoplasm</location>
    </subcellularLocation>
</comment>
<comment type="similarity">
    <text evidence="1">Belongs to the methyltransferase superfamily. RNA methyltransferase RsmG family.</text>
</comment>
<sequence>MSFDFYNELSRGCQAMGIELDRPGQERLYTYFVELKKWSQKVNLIAKGTGEAEIVENHFLDSLALLPLLPEGAGLLDIGTGAGLPGLICKAARPDLRLFLVEPRAKRVSFLRHIVRTLQLEGVEIYCSRIEDEPELFASEDISYITSRAVSDISGFLAMTEGFKSPHIRRLCLKGPRWQEELAEADEVLAAGNYQREKVVEYLLPFSGAERAIVVLR</sequence>
<keyword id="KW-0963">Cytoplasm</keyword>
<keyword id="KW-0489">Methyltransferase</keyword>
<keyword id="KW-1185">Reference proteome</keyword>
<keyword id="KW-0698">rRNA processing</keyword>
<keyword id="KW-0949">S-adenosyl-L-methionine</keyword>
<keyword id="KW-0808">Transferase</keyword>
<gene>
    <name evidence="1" type="primary">rsmG</name>
    <name type="ordered locus">DP1283</name>
</gene>
<organism>
    <name type="scientific">Desulfotalea psychrophila (strain LSv54 / DSM 12343)</name>
    <dbReference type="NCBI Taxonomy" id="177439"/>
    <lineage>
        <taxon>Bacteria</taxon>
        <taxon>Pseudomonadati</taxon>
        <taxon>Thermodesulfobacteriota</taxon>
        <taxon>Desulfobulbia</taxon>
        <taxon>Desulfobulbales</taxon>
        <taxon>Desulfocapsaceae</taxon>
        <taxon>Desulfotalea</taxon>
    </lineage>
</organism>
<protein>
    <recommendedName>
        <fullName evidence="1">Ribosomal RNA small subunit methyltransferase G</fullName>
        <ecNumber evidence="1">2.1.1.170</ecNumber>
    </recommendedName>
    <alternativeName>
        <fullName evidence="1">16S rRNA 7-methylguanosine methyltransferase</fullName>
        <shortName evidence="1">16S rRNA m7G methyltransferase</shortName>
    </alternativeName>
</protein>
<accession>Q6ANR2</accession>
<reference key="1">
    <citation type="journal article" date="2004" name="Environ. Microbiol.">
        <title>The genome of Desulfotalea psychrophila, a sulfate-reducing bacterium from permanently cold Arctic sediments.</title>
        <authorList>
            <person name="Rabus R."/>
            <person name="Ruepp A."/>
            <person name="Frickey T."/>
            <person name="Rattei T."/>
            <person name="Fartmann B."/>
            <person name="Stark M."/>
            <person name="Bauer M."/>
            <person name="Zibat A."/>
            <person name="Lombardot T."/>
            <person name="Becker I."/>
            <person name="Amann J."/>
            <person name="Gellner K."/>
            <person name="Teeling H."/>
            <person name="Leuschner W.D."/>
            <person name="Gloeckner F.-O."/>
            <person name="Lupas A.N."/>
            <person name="Amann R."/>
            <person name="Klenk H.-P."/>
        </authorList>
    </citation>
    <scope>NUCLEOTIDE SEQUENCE [LARGE SCALE GENOMIC DNA]</scope>
    <source>
        <strain>DSM 12343 / LSv54</strain>
    </source>
</reference>
<dbReference type="EC" id="2.1.1.170" evidence="1"/>
<dbReference type="EMBL" id="CR522870">
    <property type="protein sequence ID" value="CAG36012.1"/>
    <property type="molecule type" value="Genomic_DNA"/>
</dbReference>
<dbReference type="RefSeq" id="WP_011188524.1">
    <property type="nucleotide sequence ID" value="NC_006138.1"/>
</dbReference>
<dbReference type="SMR" id="Q6ANR2"/>
<dbReference type="STRING" id="177439.DP1283"/>
<dbReference type="KEGG" id="dps:DP1283"/>
<dbReference type="eggNOG" id="COG0357">
    <property type="taxonomic scope" value="Bacteria"/>
</dbReference>
<dbReference type="HOGENOM" id="CLU_065341_2_0_7"/>
<dbReference type="OrthoDB" id="9808773at2"/>
<dbReference type="Proteomes" id="UP000000602">
    <property type="component" value="Chromosome"/>
</dbReference>
<dbReference type="GO" id="GO:0005829">
    <property type="term" value="C:cytosol"/>
    <property type="evidence" value="ECO:0007669"/>
    <property type="project" value="TreeGrafter"/>
</dbReference>
<dbReference type="GO" id="GO:0070043">
    <property type="term" value="F:rRNA (guanine-N7-)-methyltransferase activity"/>
    <property type="evidence" value="ECO:0007669"/>
    <property type="project" value="UniProtKB-UniRule"/>
</dbReference>
<dbReference type="Gene3D" id="3.40.50.150">
    <property type="entry name" value="Vaccinia Virus protein VP39"/>
    <property type="match status" value="1"/>
</dbReference>
<dbReference type="HAMAP" id="MF_00074">
    <property type="entry name" value="16SrRNA_methyltr_G"/>
    <property type="match status" value="1"/>
</dbReference>
<dbReference type="InterPro" id="IPR003682">
    <property type="entry name" value="rRNA_ssu_MeTfrase_G"/>
</dbReference>
<dbReference type="InterPro" id="IPR029063">
    <property type="entry name" value="SAM-dependent_MTases_sf"/>
</dbReference>
<dbReference type="NCBIfam" id="TIGR00138">
    <property type="entry name" value="rsmG_gidB"/>
    <property type="match status" value="1"/>
</dbReference>
<dbReference type="PANTHER" id="PTHR31760">
    <property type="entry name" value="S-ADENOSYL-L-METHIONINE-DEPENDENT METHYLTRANSFERASES SUPERFAMILY PROTEIN"/>
    <property type="match status" value="1"/>
</dbReference>
<dbReference type="PANTHER" id="PTHR31760:SF0">
    <property type="entry name" value="S-ADENOSYL-L-METHIONINE-DEPENDENT METHYLTRANSFERASES SUPERFAMILY PROTEIN"/>
    <property type="match status" value="1"/>
</dbReference>
<dbReference type="Pfam" id="PF02527">
    <property type="entry name" value="GidB"/>
    <property type="match status" value="1"/>
</dbReference>
<dbReference type="PIRSF" id="PIRSF003078">
    <property type="entry name" value="GidB"/>
    <property type="match status" value="1"/>
</dbReference>
<dbReference type="SUPFAM" id="SSF53335">
    <property type="entry name" value="S-adenosyl-L-methionine-dependent methyltransferases"/>
    <property type="match status" value="1"/>
</dbReference>
<name>RSMG_DESPS</name>
<evidence type="ECO:0000255" key="1">
    <source>
        <dbReference type="HAMAP-Rule" id="MF_00074"/>
    </source>
</evidence>
<proteinExistence type="inferred from homology"/>
<feature type="chain" id="PRO_0000184246" description="Ribosomal RNA small subunit methyltransferase G">
    <location>
        <begin position="1"/>
        <end position="217"/>
    </location>
</feature>
<feature type="binding site" evidence="1">
    <location>
        <position position="79"/>
    </location>
    <ligand>
        <name>S-adenosyl-L-methionine</name>
        <dbReference type="ChEBI" id="CHEBI:59789"/>
    </ligand>
</feature>
<feature type="binding site" evidence="1">
    <location>
        <position position="84"/>
    </location>
    <ligand>
        <name>S-adenosyl-L-methionine</name>
        <dbReference type="ChEBI" id="CHEBI:59789"/>
    </ligand>
</feature>
<feature type="binding site" evidence="1">
    <location>
        <begin position="130"/>
        <end position="131"/>
    </location>
    <ligand>
        <name>S-adenosyl-L-methionine</name>
        <dbReference type="ChEBI" id="CHEBI:59789"/>
    </ligand>
</feature>
<feature type="binding site" evidence="1">
    <location>
        <position position="148"/>
    </location>
    <ligand>
        <name>S-adenosyl-L-methionine</name>
        <dbReference type="ChEBI" id="CHEBI:59789"/>
    </ligand>
</feature>